<protein>
    <recommendedName>
        <fullName>Ribonuclease kappa-B</fullName>
        <shortName>RNase K-B</shortName>
        <shortName>RNase kappa-B</shortName>
        <ecNumber>3.1.-.-</ecNumber>
    </recommendedName>
</protein>
<organism>
    <name type="scientific">Danio rerio</name>
    <name type="common">Zebrafish</name>
    <name type="synonym">Brachydanio rerio</name>
    <dbReference type="NCBI Taxonomy" id="7955"/>
    <lineage>
        <taxon>Eukaryota</taxon>
        <taxon>Metazoa</taxon>
        <taxon>Chordata</taxon>
        <taxon>Craniata</taxon>
        <taxon>Vertebrata</taxon>
        <taxon>Euteleostomi</taxon>
        <taxon>Actinopterygii</taxon>
        <taxon>Neopterygii</taxon>
        <taxon>Teleostei</taxon>
        <taxon>Ostariophysi</taxon>
        <taxon>Cypriniformes</taxon>
        <taxon>Danionidae</taxon>
        <taxon>Danioninae</taxon>
        <taxon>Danio</taxon>
    </lineage>
</organism>
<accession>Q0P442</accession>
<keyword id="KW-0255">Endonuclease</keyword>
<keyword id="KW-0378">Hydrolase</keyword>
<keyword id="KW-0472">Membrane</keyword>
<keyword id="KW-0540">Nuclease</keyword>
<keyword id="KW-1185">Reference proteome</keyword>
<keyword id="KW-0812">Transmembrane</keyword>
<keyword id="KW-1133">Transmembrane helix</keyword>
<name>RNKB_DANRE</name>
<sequence>MPSLLFCGPKLAACGIVLSVWGVIMLSMLGIFFSAKSAVLIEDVPFTEEDIRNDKDPPQIIYGLYNQVGINCFIAAAIYVGVGAVSLCQVRLNKRQEYMVT</sequence>
<proteinExistence type="inferred from homology"/>
<reference key="1">
    <citation type="submission" date="2006-08" db="EMBL/GenBank/DDBJ databases">
        <authorList>
            <consortium name="NIH - Zebrafish Gene Collection (ZGC) project"/>
        </authorList>
    </citation>
    <scope>NUCLEOTIDE SEQUENCE [LARGE SCALE MRNA]</scope>
    <source>
        <tissue>Larval eye</tissue>
    </source>
</reference>
<gene>
    <name type="primary">rnasekb</name>
    <name type="ORF">zgc:153424</name>
</gene>
<comment type="function">
    <text evidence="1">Endoribonuclease which preferentially cleaves ApU and ApG phosphodiester bonds.</text>
</comment>
<comment type="subcellular location">
    <subcellularLocation>
        <location evidence="3">Membrane</location>
        <topology evidence="3">Multi-pass membrane protein</topology>
    </subcellularLocation>
</comment>
<comment type="similarity">
    <text evidence="3">Belongs to the RNase K family.</text>
</comment>
<dbReference type="EC" id="3.1.-.-"/>
<dbReference type="EMBL" id="BC122286">
    <property type="protein sequence ID" value="AAI22287.1"/>
    <property type="molecule type" value="mRNA"/>
</dbReference>
<dbReference type="RefSeq" id="NP_001038840.1">
    <property type="nucleotide sequence ID" value="NM_001045375.1"/>
</dbReference>
<dbReference type="SMR" id="Q0P442"/>
<dbReference type="FunCoup" id="Q0P442">
    <property type="interactions" value="767"/>
</dbReference>
<dbReference type="STRING" id="7955.ENSDARP00000138622"/>
<dbReference type="PaxDb" id="7955-ENSDARP00000091585"/>
<dbReference type="Ensembl" id="ENSDART00000163908">
    <property type="protein sequence ID" value="ENSDARP00000138622"/>
    <property type="gene ID" value="ENSDARG00000104458"/>
</dbReference>
<dbReference type="GeneID" id="336290"/>
<dbReference type="KEGG" id="dre:336290"/>
<dbReference type="AGR" id="ZFIN:ZDB-GENE-060825-160"/>
<dbReference type="CTD" id="336290"/>
<dbReference type="ZFIN" id="ZDB-GENE-060825-160">
    <property type="gene designation" value="rnasekb"/>
</dbReference>
<dbReference type="eggNOG" id="ENOG502S351">
    <property type="taxonomic scope" value="Eukaryota"/>
</dbReference>
<dbReference type="HOGENOM" id="CLU_140554_2_1_1"/>
<dbReference type="InParanoid" id="Q0P442"/>
<dbReference type="OMA" id="ATQCWVA"/>
<dbReference type="OrthoDB" id="67317at2759"/>
<dbReference type="PhylomeDB" id="Q0P442"/>
<dbReference type="TreeFam" id="TF300182"/>
<dbReference type="PRO" id="PR:Q0P442"/>
<dbReference type="Proteomes" id="UP000000437">
    <property type="component" value="Chromosome 10"/>
</dbReference>
<dbReference type="Bgee" id="ENSDARG00000104458">
    <property type="expression patterns" value="Expressed in brain and 27 other cell types or tissues"/>
</dbReference>
<dbReference type="GO" id="GO:0016020">
    <property type="term" value="C:membrane"/>
    <property type="evidence" value="ECO:0007669"/>
    <property type="project" value="UniProtKB-SubCell"/>
</dbReference>
<dbReference type="GO" id="GO:0004521">
    <property type="term" value="F:RNA endonuclease activity"/>
    <property type="evidence" value="ECO:0000250"/>
    <property type="project" value="UniProtKB"/>
</dbReference>
<dbReference type="InterPro" id="IPR056552">
    <property type="entry name" value="Ribonucl_Kappa"/>
</dbReference>
<dbReference type="InterPro" id="IPR026770">
    <property type="entry name" value="RNase_K"/>
</dbReference>
<dbReference type="PANTHER" id="PTHR31733">
    <property type="entry name" value="RIBONUCLEASE KAPPA"/>
    <property type="match status" value="1"/>
</dbReference>
<dbReference type="Pfam" id="PF23489">
    <property type="entry name" value="V-ATPase_su_f"/>
    <property type="match status" value="1"/>
</dbReference>
<feature type="chain" id="PRO_0000344224" description="Ribonuclease kappa-B">
    <location>
        <begin position="1"/>
        <end position="101"/>
    </location>
</feature>
<feature type="transmembrane region" description="Helical" evidence="2">
    <location>
        <begin position="13"/>
        <end position="33"/>
    </location>
</feature>
<feature type="transmembrane region" description="Helical" evidence="2">
    <location>
        <begin position="68"/>
        <end position="88"/>
    </location>
</feature>
<evidence type="ECO:0000250" key="1"/>
<evidence type="ECO:0000255" key="2"/>
<evidence type="ECO:0000305" key="3"/>